<name>RL34_ECO27</name>
<gene>
    <name evidence="1" type="primary">rpmH</name>
    <name type="ordered locus">E2348C_4014</name>
</gene>
<protein>
    <recommendedName>
        <fullName evidence="1">Large ribosomal subunit protein bL34</fullName>
    </recommendedName>
    <alternativeName>
        <fullName evidence="2">50S ribosomal protein L34</fullName>
    </alternativeName>
</protein>
<keyword id="KW-1185">Reference proteome</keyword>
<keyword id="KW-0687">Ribonucleoprotein</keyword>
<keyword id="KW-0689">Ribosomal protein</keyword>
<reference key="1">
    <citation type="journal article" date="2009" name="J. Bacteriol.">
        <title>Complete genome sequence and comparative genome analysis of enteropathogenic Escherichia coli O127:H6 strain E2348/69.</title>
        <authorList>
            <person name="Iguchi A."/>
            <person name="Thomson N.R."/>
            <person name="Ogura Y."/>
            <person name="Saunders D."/>
            <person name="Ooka T."/>
            <person name="Henderson I.R."/>
            <person name="Harris D."/>
            <person name="Asadulghani M."/>
            <person name="Kurokawa K."/>
            <person name="Dean P."/>
            <person name="Kenny B."/>
            <person name="Quail M.A."/>
            <person name="Thurston S."/>
            <person name="Dougan G."/>
            <person name="Hayashi T."/>
            <person name="Parkhill J."/>
            <person name="Frankel G."/>
        </authorList>
    </citation>
    <scope>NUCLEOTIDE SEQUENCE [LARGE SCALE GENOMIC DNA]</scope>
    <source>
        <strain>E2348/69 / EPEC</strain>
    </source>
</reference>
<evidence type="ECO:0000255" key="1">
    <source>
        <dbReference type="HAMAP-Rule" id="MF_00391"/>
    </source>
</evidence>
<evidence type="ECO:0000305" key="2"/>
<dbReference type="EMBL" id="FM180568">
    <property type="protein sequence ID" value="CAS11562.1"/>
    <property type="molecule type" value="Genomic_DNA"/>
</dbReference>
<dbReference type="RefSeq" id="WP_000831330.1">
    <property type="nucleotide sequence ID" value="NC_011601.1"/>
</dbReference>
<dbReference type="SMR" id="B7UMH0"/>
<dbReference type="GeneID" id="98190980"/>
<dbReference type="KEGG" id="ecg:E2348C_4014"/>
<dbReference type="HOGENOM" id="CLU_129938_2_1_6"/>
<dbReference type="Proteomes" id="UP000008205">
    <property type="component" value="Chromosome"/>
</dbReference>
<dbReference type="GO" id="GO:1990904">
    <property type="term" value="C:ribonucleoprotein complex"/>
    <property type="evidence" value="ECO:0007669"/>
    <property type="project" value="UniProtKB-KW"/>
</dbReference>
<dbReference type="GO" id="GO:0005840">
    <property type="term" value="C:ribosome"/>
    <property type="evidence" value="ECO:0007669"/>
    <property type="project" value="UniProtKB-KW"/>
</dbReference>
<dbReference type="GO" id="GO:0003735">
    <property type="term" value="F:structural constituent of ribosome"/>
    <property type="evidence" value="ECO:0007669"/>
    <property type="project" value="InterPro"/>
</dbReference>
<dbReference type="GO" id="GO:0006412">
    <property type="term" value="P:translation"/>
    <property type="evidence" value="ECO:0007669"/>
    <property type="project" value="UniProtKB-UniRule"/>
</dbReference>
<dbReference type="FunFam" id="1.10.287.3980:FF:000001">
    <property type="entry name" value="Mitochondrial ribosomal protein L34"/>
    <property type="match status" value="1"/>
</dbReference>
<dbReference type="Gene3D" id="1.10.287.3980">
    <property type="match status" value="1"/>
</dbReference>
<dbReference type="HAMAP" id="MF_00391">
    <property type="entry name" value="Ribosomal_bL34"/>
    <property type="match status" value="1"/>
</dbReference>
<dbReference type="InterPro" id="IPR000271">
    <property type="entry name" value="Ribosomal_bL34"/>
</dbReference>
<dbReference type="InterPro" id="IPR020939">
    <property type="entry name" value="Ribosomal_bL34_CS"/>
</dbReference>
<dbReference type="NCBIfam" id="TIGR01030">
    <property type="entry name" value="rpmH_bact"/>
    <property type="match status" value="1"/>
</dbReference>
<dbReference type="PANTHER" id="PTHR14503:SF4">
    <property type="entry name" value="LARGE RIBOSOMAL SUBUNIT PROTEIN BL34M"/>
    <property type="match status" value="1"/>
</dbReference>
<dbReference type="PANTHER" id="PTHR14503">
    <property type="entry name" value="MITOCHONDRIAL RIBOSOMAL PROTEIN 34 FAMILY MEMBER"/>
    <property type="match status" value="1"/>
</dbReference>
<dbReference type="Pfam" id="PF00468">
    <property type="entry name" value="Ribosomal_L34"/>
    <property type="match status" value="1"/>
</dbReference>
<dbReference type="PROSITE" id="PS00784">
    <property type="entry name" value="RIBOSOMAL_L34"/>
    <property type="match status" value="1"/>
</dbReference>
<accession>B7UMH0</accession>
<sequence length="46" mass="5380">MKRTFQPSVLKRNRSHGFRARMATKNGRQVLARRRAKGRARLTVSK</sequence>
<organism>
    <name type="scientific">Escherichia coli O127:H6 (strain E2348/69 / EPEC)</name>
    <dbReference type="NCBI Taxonomy" id="574521"/>
    <lineage>
        <taxon>Bacteria</taxon>
        <taxon>Pseudomonadati</taxon>
        <taxon>Pseudomonadota</taxon>
        <taxon>Gammaproteobacteria</taxon>
        <taxon>Enterobacterales</taxon>
        <taxon>Enterobacteriaceae</taxon>
        <taxon>Escherichia</taxon>
    </lineage>
</organism>
<comment type="similarity">
    <text evidence="1">Belongs to the bacterial ribosomal protein bL34 family.</text>
</comment>
<feature type="chain" id="PRO_1000134442" description="Large ribosomal subunit protein bL34">
    <location>
        <begin position="1"/>
        <end position="46"/>
    </location>
</feature>
<proteinExistence type="inferred from homology"/>